<keyword id="KW-0007">Acetylation</keyword>
<keyword id="KW-0067">ATP-binding</keyword>
<keyword id="KW-0436">Ligase</keyword>
<keyword id="KW-0496">Mitochondrion</keyword>
<keyword id="KW-0547">Nucleotide-binding</keyword>
<keyword id="KW-0597">Phosphoprotein</keyword>
<keyword id="KW-1185">Reference proteome</keyword>
<keyword id="KW-0816">Tricarboxylic acid cycle</keyword>
<name>SUCB1_MESAU</name>
<accession>P86226</accession>
<gene>
    <name evidence="4" type="primary">Sucla2</name>
</gene>
<organism>
    <name type="scientific">Mesocricetus auratus</name>
    <name type="common">Golden hamster</name>
    <dbReference type="NCBI Taxonomy" id="10036"/>
    <lineage>
        <taxon>Eukaryota</taxon>
        <taxon>Metazoa</taxon>
        <taxon>Chordata</taxon>
        <taxon>Craniata</taxon>
        <taxon>Vertebrata</taxon>
        <taxon>Euteleostomi</taxon>
        <taxon>Mammalia</taxon>
        <taxon>Eutheria</taxon>
        <taxon>Euarchontoglires</taxon>
        <taxon>Glires</taxon>
        <taxon>Rodentia</taxon>
        <taxon>Myomorpha</taxon>
        <taxon>Muroidea</taxon>
        <taxon>Cricetidae</taxon>
        <taxon>Cricetinae</taxon>
        <taxon>Mesocricetus</taxon>
    </lineage>
</organism>
<comment type="function">
    <text evidence="4">ATP-specific succinyl-CoA synthetase functions in the citric acid cycle (TCA), coupling the hydrolysis of succinyl-CoA to the synthesis of ATP and thus represents the only step of substrate-level phosphorylation in the TCA. The beta subunit provides nucleotide specificity of the enzyme and binds the substrate succinate, while the binding sites for coenzyme A and phosphate are found in the alpha subunit.</text>
</comment>
<comment type="catalytic activity">
    <reaction evidence="4">
        <text>succinate + ATP + CoA = succinyl-CoA + ADP + phosphate</text>
        <dbReference type="Rhea" id="RHEA:17661"/>
        <dbReference type="ChEBI" id="CHEBI:30031"/>
        <dbReference type="ChEBI" id="CHEBI:30616"/>
        <dbReference type="ChEBI" id="CHEBI:43474"/>
        <dbReference type="ChEBI" id="CHEBI:57287"/>
        <dbReference type="ChEBI" id="CHEBI:57292"/>
        <dbReference type="ChEBI" id="CHEBI:456216"/>
        <dbReference type="EC" id="6.2.1.5"/>
    </reaction>
</comment>
<comment type="pathway">
    <text evidence="4">Carbohydrate metabolism; tricarboxylic acid cycle; succinate from succinyl-CoA (ligase route): step 1/1.</text>
</comment>
<comment type="subunit">
    <text evidence="4">Heterodimer of an alpha and a beta subunit. The beta subunit determines specificity for ATP. Interacts with ALAS2 (By similarity).</text>
</comment>
<comment type="subcellular location">
    <subcellularLocation>
        <location evidence="4">Mitochondrion</location>
    </subcellularLocation>
</comment>
<comment type="similarity">
    <text evidence="7">Belongs to the succinate/malate CoA ligase beta subunit family. ATP-specific subunit beta subfamily.</text>
</comment>
<protein>
    <recommendedName>
        <fullName evidence="4">Succinate--CoA ligase [ADP-forming] subunit beta, mitochondrial</fullName>
        <ecNumber evidence="4">6.2.1.5</ecNumber>
    </recommendedName>
    <alternativeName>
        <fullName evidence="4">ATP-specific succinyl-CoA synthetase subunit beta</fullName>
        <shortName evidence="4">A-SCS</shortName>
    </alternativeName>
    <alternativeName>
        <fullName evidence="4">Succinyl-CoA synthetase beta-A chain</fullName>
        <shortName evidence="4">SCS-betaA</shortName>
    </alternativeName>
</protein>
<dbReference type="EC" id="6.2.1.5" evidence="4"/>
<dbReference type="SMR" id="P86226"/>
<dbReference type="UniPathway" id="UPA00223">
    <property type="reaction ID" value="UER00999"/>
</dbReference>
<dbReference type="Proteomes" id="UP000189706">
    <property type="component" value="Unplaced"/>
</dbReference>
<dbReference type="GO" id="GO:0005739">
    <property type="term" value="C:mitochondrion"/>
    <property type="evidence" value="ECO:0007669"/>
    <property type="project" value="UniProtKB-SubCell"/>
</dbReference>
<dbReference type="GO" id="GO:0042709">
    <property type="term" value="C:succinate-CoA ligase complex"/>
    <property type="evidence" value="ECO:0007669"/>
    <property type="project" value="TreeGrafter"/>
</dbReference>
<dbReference type="GO" id="GO:0005524">
    <property type="term" value="F:ATP binding"/>
    <property type="evidence" value="ECO:0007669"/>
    <property type="project" value="UniProtKB-KW"/>
</dbReference>
<dbReference type="GO" id="GO:0004775">
    <property type="term" value="F:succinate-CoA ligase (ADP-forming) activity"/>
    <property type="evidence" value="ECO:0007669"/>
    <property type="project" value="UniProtKB-EC"/>
</dbReference>
<dbReference type="GO" id="GO:0006104">
    <property type="term" value="P:succinyl-CoA metabolic process"/>
    <property type="evidence" value="ECO:0007669"/>
    <property type="project" value="TreeGrafter"/>
</dbReference>
<dbReference type="GO" id="GO:0006099">
    <property type="term" value="P:tricarboxylic acid cycle"/>
    <property type="evidence" value="ECO:0007669"/>
    <property type="project" value="UniProtKB-UniPathway"/>
</dbReference>
<dbReference type="Gene3D" id="3.30.470.20">
    <property type="entry name" value="ATP-grasp fold, B domain"/>
    <property type="match status" value="1"/>
</dbReference>
<dbReference type="Gene3D" id="3.40.50.261">
    <property type="entry name" value="Succinyl-CoA synthetase domains"/>
    <property type="match status" value="1"/>
</dbReference>
<dbReference type="InterPro" id="IPR013650">
    <property type="entry name" value="ATP-grasp_succ-CoA_synth-type"/>
</dbReference>
<dbReference type="InterPro" id="IPR016102">
    <property type="entry name" value="Succinyl-CoA_synth-like"/>
</dbReference>
<dbReference type="PANTHER" id="PTHR11815:SF1">
    <property type="entry name" value="SUCCINATE--COA LIGASE [ADP-FORMING] SUBUNIT BETA, MITOCHONDRIAL"/>
    <property type="match status" value="1"/>
</dbReference>
<dbReference type="PANTHER" id="PTHR11815">
    <property type="entry name" value="SUCCINYL-COA SYNTHETASE BETA CHAIN"/>
    <property type="match status" value="1"/>
</dbReference>
<dbReference type="Pfam" id="PF08442">
    <property type="entry name" value="ATP-grasp_2"/>
    <property type="match status" value="1"/>
</dbReference>
<dbReference type="SUPFAM" id="SSF56059">
    <property type="entry name" value="Glutathione synthetase ATP-binding domain-like"/>
    <property type="match status" value="1"/>
</dbReference>
<dbReference type="SUPFAM" id="SSF52210">
    <property type="entry name" value="Succinyl-CoA synthetase domains"/>
    <property type="match status" value="1"/>
</dbReference>
<reference key="1">
    <citation type="journal article" date="2010" name="Asian J. Androl.">
        <title>Glucose-regulated protein precursor (GRP78) and tumor rejection antigen (GP96) are unique to hamster caput epididymal spermatozoa.</title>
        <authorList>
            <person name="Kameshwari D.B."/>
            <person name="Bhande S."/>
            <person name="Sundaram C.S."/>
            <person name="Kota V."/>
            <person name="Siva A.B."/>
            <person name="Shivaji S."/>
        </authorList>
    </citation>
    <scope>IDENTIFICATION BY MASS SPECTROMETRY</scope>
</reference>
<proteinExistence type="evidence at protein level"/>
<sequence length="221" mass="24249">DVVIKAQVLAGGRIVFSPEEAKLITKQTGAKGRICNQVLVCERREYYFAITMERSFQGPVLIGSAQGGVNIEDVAAENPEAIVKKMGFPSNIVDSAAENMIKLYNLFLKINFDSNSAYRQKIFDLQDWSQEDERLHGGTPANFLDVGGGATVQQVTEAFKVQAILVNIFGGIMRLQGTRVDDAKILACDDLDEAAKMVVKLSEIVTLAKEAHVDVKFQLPI</sequence>
<feature type="chain" id="PRO_0000394309" description="Succinate--CoA ligase [ADP-forming] subunit beta, mitochondrial">
    <location>
        <begin position="1" status="less than"/>
        <end position="221"/>
    </location>
</feature>
<feature type="domain" description="ATP-grasp" evidence="6">
    <location>
        <begin position="1" status="less than"/>
        <end position="122"/>
    </location>
</feature>
<feature type="binding site" evidence="1">
    <location>
        <position position="5"/>
    </location>
    <ligand>
        <name>ATP</name>
        <dbReference type="ChEBI" id="CHEBI:30616"/>
    </ligand>
</feature>
<feature type="binding site" evidence="1">
    <location>
        <begin position="171"/>
        <end position="173"/>
    </location>
    <ligand>
        <name>substrate</name>
        <note>ligand shared with subunit alpha</note>
    </ligand>
</feature>
<feature type="site" description="Important for substrate specificity" evidence="2">
    <location>
        <position position="1"/>
    </location>
</feature>
<feature type="modified residue" description="N6-acetyllysine" evidence="5">
    <location>
        <position position="22"/>
    </location>
</feature>
<feature type="modified residue" description="N6-acetyllysine" evidence="3">
    <location>
        <position position="26"/>
    </location>
</feature>
<feature type="modified residue" description="Phosphoserine" evidence="5">
    <location>
        <position position="114"/>
    </location>
</feature>
<feature type="modified residue" description="Phosphothreonine" evidence="5">
    <location>
        <position position="139"/>
    </location>
</feature>
<feature type="modified residue" description="N6-acetyllysine" evidence="5">
    <location>
        <position position="196"/>
    </location>
</feature>
<feature type="non-consecutive residues" evidence="7">
    <location>
        <begin position="13"/>
        <end position="14"/>
    </location>
</feature>
<feature type="non-consecutive residues" evidence="7">
    <location>
        <begin position="22"/>
        <end position="23"/>
    </location>
</feature>
<feature type="non-consecutive residues" evidence="7">
    <location>
        <begin position="43"/>
        <end position="44"/>
    </location>
</feature>
<feature type="non-consecutive residues" evidence="7">
    <location>
        <begin position="84"/>
        <end position="85"/>
    </location>
</feature>
<feature type="non-consecutive residues" evidence="7">
    <location>
        <begin position="109"/>
        <end position="110"/>
    </location>
</feature>
<feature type="non-consecutive residues" evidence="7">
    <location>
        <begin position="121"/>
        <end position="122"/>
    </location>
</feature>
<feature type="non-consecutive residues" evidence="7">
    <location>
        <begin position="134"/>
        <end position="135"/>
    </location>
</feature>
<feature type="non-consecutive residues" evidence="7">
    <location>
        <begin position="160"/>
        <end position="161"/>
    </location>
</feature>
<feature type="non-consecutive residues" evidence="7">
    <location>
        <begin position="174"/>
        <end position="175"/>
    </location>
</feature>
<feature type="non-consecutive residues" evidence="7">
    <location>
        <begin position="184"/>
        <end position="185"/>
    </location>
</feature>
<feature type="non-terminal residue">
    <location>
        <position position="1"/>
    </location>
</feature>
<evidence type="ECO:0000250" key="1">
    <source>
        <dbReference type="UniProtKB" id="P0A836"/>
    </source>
</evidence>
<evidence type="ECO:0000250" key="2">
    <source>
        <dbReference type="UniProtKB" id="P53590"/>
    </source>
</evidence>
<evidence type="ECO:0000250" key="3">
    <source>
        <dbReference type="UniProtKB" id="Q9P2R7"/>
    </source>
</evidence>
<evidence type="ECO:0000250" key="4">
    <source>
        <dbReference type="UniProtKB" id="Q9YI37"/>
    </source>
</evidence>
<evidence type="ECO:0000250" key="5">
    <source>
        <dbReference type="UniProtKB" id="Q9Z2I9"/>
    </source>
</evidence>
<evidence type="ECO:0000255" key="6">
    <source>
        <dbReference type="PROSITE-ProRule" id="PRU00409"/>
    </source>
</evidence>
<evidence type="ECO:0000305" key="7"/>